<evidence type="ECO:0000255" key="1">
    <source>
        <dbReference type="HAMAP-Rule" id="MF_01088"/>
    </source>
</evidence>
<organism>
    <name type="scientific">Yersinia enterocolitica serotype O:8 / biotype 1B (strain NCTC 13174 / 8081)</name>
    <dbReference type="NCBI Taxonomy" id="393305"/>
    <lineage>
        <taxon>Bacteria</taxon>
        <taxon>Pseudomonadati</taxon>
        <taxon>Pseudomonadota</taxon>
        <taxon>Gammaproteobacteria</taxon>
        <taxon>Enterobacterales</taxon>
        <taxon>Yersiniaceae</taxon>
        <taxon>Yersinia</taxon>
    </lineage>
</organism>
<protein>
    <recommendedName>
        <fullName evidence="1">Universal stress protein B</fullName>
    </recommendedName>
</protein>
<dbReference type="EMBL" id="AM286415">
    <property type="protein sequence ID" value="CAL14067.1"/>
    <property type="molecule type" value="Genomic_DNA"/>
</dbReference>
<dbReference type="RefSeq" id="WP_005174839.1">
    <property type="nucleotide sequence ID" value="NC_008800.1"/>
</dbReference>
<dbReference type="RefSeq" id="YP_001008191.1">
    <property type="nucleotide sequence ID" value="NC_008800.1"/>
</dbReference>
<dbReference type="KEGG" id="yen:YE4049"/>
<dbReference type="PATRIC" id="fig|393305.7.peg.4310"/>
<dbReference type="eggNOG" id="ENOG502ZP3V">
    <property type="taxonomic scope" value="Bacteria"/>
</dbReference>
<dbReference type="HOGENOM" id="CLU_151816_0_0_6"/>
<dbReference type="OrthoDB" id="6432605at2"/>
<dbReference type="Proteomes" id="UP000000642">
    <property type="component" value="Chromosome"/>
</dbReference>
<dbReference type="GO" id="GO:0005886">
    <property type="term" value="C:plasma membrane"/>
    <property type="evidence" value="ECO:0007669"/>
    <property type="project" value="UniProtKB-SubCell"/>
</dbReference>
<dbReference type="HAMAP" id="MF_01088">
    <property type="entry name" value="UspB"/>
    <property type="match status" value="1"/>
</dbReference>
<dbReference type="InterPro" id="IPR019598">
    <property type="entry name" value="Universal_stress_protein_B"/>
</dbReference>
<dbReference type="NCBIfam" id="NF003435">
    <property type="entry name" value="PRK04960.1"/>
    <property type="match status" value="1"/>
</dbReference>
<dbReference type="Pfam" id="PF10625">
    <property type="entry name" value="UspB"/>
    <property type="match status" value="1"/>
</dbReference>
<reference key="1">
    <citation type="journal article" date="2006" name="PLoS Genet.">
        <title>The complete genome sequence and comparative genome analysis of the high pathogenicity Yersinia enterocolitica strain 8081.</title>
        <authorList>
            <person name="Thomson N.R."/>
            <person name="Howard S."/>
            <person name="Wren B.W."/>
            <person name="Holden M.T.G."/>
            <person name="Crossman L."/>
            <person name="Challis G.L."/>
            <person name="Churcher C."/>
            <person name="Mungall K."/>
            <person name="Brooks K."/>
            <person name="Chillingworth T."/>
            <person name="Feltwell T."/>
            <person name="Abdellah Z."/>
            <person name="Hauser H."/>
            <person name="Jagels K."/>
            <person name="Maddison M."/>
            <person name="Moule S."/>
            <person name="Sanders M."/>
            <person name="Whitehead S."/>
            <person name="Quail M.A."/>
            <person name="Dougan G."/>
            <person name="Parkhill J."/>
            <person name="Prentice M.B."/>
        </authorList>
    </citation>
    <scope>NUCLEOTIDE SEQUENCE [LARGE SCALE GENOMIC DNA]</scope>
    <source>
        <strain>NCTC 13174 / 8081</strain>
    </source>
</reference>
<name>USPB_YERE8</name>
<proteinExistence type="inferred from homology"/>
<comment type="subcellular location">
    <subcellularLocation>
        <location evidence="1">Cell inner membrane</location>
        <topology evidence="1">Multi-pass membrane protein</topology>
    </subcellularLocation>
</comment>
<comment type="similarity">
    <text evidence="1">Belongs to the universal stress protein B family.</text>
</comment>
<gene>
    <name evidence="1" type="primary">uspB</name>
    <name type="ordered locus">YE4049</name>
</gene>
<feature type="chain" id="PRO_1000064884" description="Universal stress protein B">
    <location>
        <begin position="1"/>
        <end position="111"/>
    </location>
</feature>
<feature type="transmembrane region" description="Helical" evidence="1">
    <location>
        <begin position="1"/>
        <end position="21"/>
    </location>
</feature>
<feature type="transmembrane region" description="Helical" evidence="1">
    <location>
        <begin position="90"/>
        <end position="110"/>
    </location>
</feature>
<accession>A1JSP6</accession>
<keyword id="KW-0997">Cell inner membrane</keyword>
<keyword id="KW-1003">Cell membrane</keyword>
<keyword id="KW-0472">Membrane</keyword>
<keyword id="KW-0812">Transmembrane</keyword>
<keyword id="KW-1133">Transmembrane helix</keyword>
<sequence length="111" mass="12694">MISTVALFWALCVVCVINMARYYSSLRALLVVLRGCDPLLYQYVDGGGFFTSHGQPSKQIRLVGYIFAQRYLDHHDPEFIRRCERLRGQFILTSALCGLVMVSLVGLILWY</sequence>